<sequence length="490" mass="56056">MESISMMGSPKSLSETFLPNGINGIKDARKVTVGVIGSGDFAKSLTIRLIRCGYHVVIGSRNPKFASEFFPHVVDVTHHEDALTKTNIIFVAIHREHYTSLWDLRHLLVGKILIDVSNNMRINQYPESNAEYLASLFPDSLIVKGFNVVSAWALQLGPKDASRQVYICSNNIQARQQVIELARQLNFIPIDLGSLSSAREIENLPLRLFTLWRGPVVVAISLATFFFLYSFVRDVIHPYARNQQSDFYKIPIEIVNKTLPIVAITLLSLVYLAGLLAAAYQLYYGTKYRRFPPWLETWLQCRKQLGLLSFFFAMVHVAYSLCLPMRRSERYLFLNMAYQQVHANIENSWNEEEVWRIEMYISFGIMSLGLLSLLAVTSIPSVSNALNWREFSFIQSTLGYVALLISTFHVLIYGWKRAFEEEYYRFYTPPNFVLALVLPSIVILGKIILFLPCISRKLKRIKKGWEKSQFLEEGMGGTIPHVSPERVTVM</sequence>
<organism>
    <name type="scientific">Homo sapiens</name>
    <name type="common">Human</name>
    <dbReference type="NCBI Taxonomy" id="9606"/>
    <lineage>
        <taxon>Eukaryota</taxon>
        <taxon>Metazoa</taxon>
        <taxon>Chordata</taxon>
        <taxon>Craniata</taxon>
        <taxon>Vertebrata</taxon>
        <taxon>Euteleostomi</taxon>
        <taxon>Mammalia</taxon>
        <taxon>Eutheria</taxon>
        <taxon>Euarchontoglires</taxon>
        <taxon>Primates</taxon>
        <taxon>Haplorrhini</taxon>
        <taxon>Catarrhini</taxon>
        <taxon>Hominidae</taxon>
        <taxon>Homo</taxon>
    </lineage>
</organism>
<comment type="function">
    <text evidence="2 3">Integral membrane protein that functions as a NADPH-dependent ferric-chelate reductase, using NADPH from one side of the membrane to reduce a Fe(3+) chelate that is bound on the other side of the membrane (By similarity). Mediates sequential transmembrane electron transfer from NADPH to FAD and onto heme, and finally to the Fe(3+) chelate (By similarity). Can also reduce Cu(2+) to Cu(1+) (By similarity).</text>
</comment>
<comment type="catalytic activity">
    <reaction evidence="3">
        <text>2 Fe(2+) + NADP(+) + H(+) = 2 Fe(3+) + NADPH</text>
        <dbReference type="Rhea" id="RHEA:71767"/>
        <dbReference type="ChEBI" id="CHEBI:15378"/>
        <dbReference type="ChEBI" id="CHEBI:29033"/>
        <dbReference type="ChEBI" id="CHEBI:29034"/>
        <dbReference type="ChEBI" id="CHEBI:57783"/>
        <dbReference type="ChEBI" id="CHEBI:58349"/>
    </reaction>
    <physiologicalReaction direction="right-to-left" evidence="3">
        <dbReference type="Rhea" id="RHEA:71769"/>
    </physiologicalReaction>
</comment>
<comment type="catalytic activity">
    <reaction evidence="3">
        <text>2 Cu(+) + NADP(+) + H(+) = 2 Cu(2+) + NADPH</text>
        <dbReference type="Rhea" id="RHEA:71771"/>
        <dbReference type="ChEBI" id="CHEBI:15378"/>
        <dbReference type="ChEBI" id="CHEBI:29036"/>
        <dbReference type="ChEBI" id="CHEBI:49552"/>
        <dbReference type="ChEBI" id="CHEBI:57783"/>
        <dbReference type="ChEBI" id="CHEBI:58349"/>
    </reaction>
    <physiologicalReaction direction="right-to-left" evidence="3">
        <dbReference type="Rhea" id="RHEA:71773"/>
    </physiologicalReaction>
</comment>
<comment type="cofactor">
    <cofactor evidence="2">
        <name>FAD</name>
        <dbReference type="ChEBI" id="CHEBI:57692"/>
    </cofactor>
</comment>
<comment type="cofactor">
    <cofactor evidence="2">
        <name>heme b</name>
        <dbReference type="ChEBI" id="CHEBI:60344"/>
    </cofactor>
</comment>
<comment type="subcellular location">
    <subcellularLocation>
        <location evidence="3">Endosome membrane</location>
        <topology evidence="4">Multi-pass membrane protein</topology>
    </subcellularLocation>
    <subcellularLocation>
        <location evidence="6">Cell membrane</location>
        <topology evidence="4">Multi-pass membrane protein</topology>
    </subcellularLocation>
</comment>
<comment type="alternative products">
    <event type="alternative splicing"/>
    <isoform>
        <id>Q8NFT2-1</id>
        <name>1</name>
        <sequence type="displayed"/>
    </isoform>
    <isoform>
        <id>Q8NFT2-2</id>
        <name>2</name>
        <sequence type="described" ref="VSP_030999"/>
    </isoform>
    <isoform>
        <id>Q8NFT2-3</id>
        <name>3</name>
        <sequence type="described" ref="VSP_045590"/>
    </isoform>
</comment>
<comment type="tissue specificity">
    <text evidence="5 6 9">Expressed at high levels in prostate and at significantly lower levels in heart, brain, kidney, pancreas, and ovary.</text>
</comment>
<comment type="similarity">
    <text evidence="15">Belongs to the STEAP family.</text>
</comment>
<comment type="online information" name="Atlas of Genetics and Cytogenetics in Oncology and Haematology">
    <link uri="https://atlasgeneticsoncology.org/gene/42435/STEAP2"/>
</comment>
<evidence type="ECO:0000250" key="1">
    <source>
        <dbReference type="UniProtKB" id="Q658P3"/>
    </source>
</evidence>
<evidence type="ECO:0000250" key="2">
    <source>
        <dbReference type="UniProtKB" id="Q687X5"/>
    </source>
</evidence>
<evidence type="ECO:0000250" key="3">
    <source>
        <dbReference type="UniProtKB" id="Q8BWB6"/>
    </source>
</evidence>
<evidence type="ECO:0000255" key="4"/>
<evidence type="ECO:0000269" key="5">
    <source>
    </source>
</evidence>
<evidence type="ECO:0000269" key="6">
    <source>
    </source>
</evidence>
<evidence type="ECO:0000269" key="7">
    <source>
    </source>
</evidence>
<evidence type="ECO:0000269" key="8">
    <source>
    </source>
</evidence>
<evidence type="ECO:0000269" key="9">
    <source>
    </source>
</evidence>
<evidence type="ECO:0000269" key="10">
    <source ref="3"/>
</evidence>
<evidence type="ECO:0000269" key="11">
    <source ref="7"/>
</evidence>
<evidence type="ECO:0000303" key="12">
    <source>
    </source>
</evidence>
<evidence type="ECO:0000303" key="13">
    <source>
    </source>
</evidence>
<evidence type="ECO:0000303" key="14">
    <source ref="3"/>
</evidence>
<evidence type="ECO:0000305" key="15"/>
<evidence type="ECO:0007744" key="16">
    <source>
    </source>
</evidence>
<evidence type="ECO:0007829" key="17">
    <source>
        <dbReference type="PDB" id="7TAI"/>
    </source>
</evidence>
<feature type="chain" id="PRO_0000191697" description="Metalloreductase STEAP2">
    <location>
        <begin position="1"/>
        <end position="490"/>
    </location>
</feature>
<feature type="transmembrane region" description="Helical" evidence="4">
    <location>
        <begin position="208"/>
        <end position="228"/>
    </location>
</feature>
<feature type="transmembrane region" description="Helical" evidence="4">
    <location>
        <begin position="259"/>
        <end position="279"/>
    </location>
</feature>
<feature type="transmembrane region" description="Helical" evidence="4">
    <location>
        <begin position="305"/>
        <end position="325"/>
    </location>
</feature>
<feature type="transmembrane region" description="Helical" evidence="4">
    <location>
        <begin position="359"/>
        <end position="379"/>
    </location>
</feature>
<feature type="transmembrane region" description="Helical" evidence="4">
    <location>
        <begin position="393"/>
        <end position="413"/>
    </location>
</feature>
<feature type="transmembrane region" description="Helical" evidence="4">
    <location>
        <begin position="432"/>
        <end position="452"/>
    </location>
</feature>
<feature type="domain" description="Ferric oxidoreductase">
    <location>
        <begin position="259"/>
        <end position="407"/>
    </location>
</feature>
<feature type="binding site" evidence="1">
    <location>
        <begin position="38"/>
        <end position="41"/>
    </location>
    <ligand>
        <name>NADP(+)</name>
        <dbReference type="ChEBI" id="CHEBI:58349"/>
    </ligand>
</feature>
<feature type="binding site" evidence="1">
    <location>
        <begin position="60"/>
        <end position="61"/>
    </location>
    <ligand>
        <name>NADP(+)</name>
        <dbReference type="ChEBI" id="CHEBI:58349"/>
    </ligand>
</feature>
<feature type="binding site" evidence="1">
    <location>
        <begin position="93"/>
        <end position="100"/>
    </location>
    <ligand>
        <name>NADP(+)</name>
        <dbReference type="ChEBI" id="CHEBI:58349"/>
    </ligand>
</feature>
<feature type="binding site" evidence="1">
    <location>
        <position position="118"/>
    </location>
    <ligand>
        <name>NADP(+)</name>
        <dbReference type="ChEBI" id="CHEBI:58349"/>
    </ligand>
</feature>
<feature type="binding site" evidence="1">
    <location>
        <position position="151"/>
    </location>
    <ligand>
        <name>NADP(+)</name>
        <dbReference type="ChEBI" id="CHEBI:58349"/>
    </ligand>
</feature>
<feature type="binding site" evidence="2">
    <location>
        <position position="152"/>
    </location>
    <ligand>
        <name>FAD</name>
        <dbReference type="ChEBI" id="CHEBI:57692"/>
    </ligand>
</feature>
<feature type="binding site" evidence="2">
    <location>
        <position position="160"/>
    </location>
    <ligand>
        <name>FAD</name>
        <dbReference type="ChEBI" id="CHEBI:57692"/>
    </ligand>
</feature>
<feature type="binding site" evidence="1">
    <location>
        <position position="229"/>
    </location>
    <ligand>
        <name>Fe(3+)</name>
        <dbReference type="ChEBI" id="CHEBI:29034"/>
    </ligand>
</feature>
<feature type="binding site" evidence="2">
    <location>
        <position position="281"/>
    </location>
    <ligand>
        <name>FAD</name>
        <dbReference type="ChEBI" id="CHEBI:57692"/>
    </ligand>
</feature>
<feature type="binding site" evidence="2">
    <location>
        <position position="302"/>
    </location>
    <ligand>
        <name>FAD</name>
        <dbReference type="ChEBI" id="CHEBI:57692"/>
    </ligand>
</feature>
<feature type="binding site" description="axial binding residue" evidence="2">
    <location>
        <position position="316"/>
    </location>
    <ligand>
        <name>heme b</name>
        <dbReference type="ChEBI" id="CHEBI:60344"/>
    </ligand>
    <ligandPart>
        <name>Fe</name>
        <dbReference type="ChEBI" id="CHEBI:18248"/>
    </ligandPart>
</feature>
<feature type="binding site" evidence="1">
    <location>
        <position position="319"/>
    </location>
    <ligand>
        <name>Fe(3+)</name>
        <dbReference type="ChEBI" id="CHEBI:29034"/>
    </ligand>
</feature>
<feature type="binding site" evidence="2">
    <location>
        <position position="378"/>
    </location>
    <ligand>
        <name>FAD</name>
        <dbReference type="ChEBI" id="CHEBI:57692"/>
    </ligand>
</feature>
<feature type="binding site" evidence="2">
    <location>
        <position position="395"/>
    </location>
    <ligand>
        <name>FAD</name>
        <dbReference type="ChEBI" id="CHEBI:57692"/>
    </ligand>
</feature>
<feature type="binding site" description="axial binding residue" evidence="2">
    <location>
        <position position="409"/>
    </location>
    <ligand>
        <name>heme b</name>
        <dbReference type="ChEBI" id="CHEBI:60344"/>
    </ligand>
    <ligandPart>
        <name>Fe</name>
        <dbReference type="ChEBI" id="CHEBI:18248"/>
    </ligandPart>
</feature>
<feature type="modified residue" description="Phosphoserine" evidence="3">
    <location>
        <position position="483"/>
    </location>
</feature>
<feature type="splice variant" id="VSP_045590" description="In isoform 3." evidence="12">
    <original>STLGYVALLISTFHVLIYGWKRAFEEEYYRFYTPPNFVLALVLPSIVILGKIILFLPCISRKLKRIKKGWEKSQFLEEGMGGTIPHVSPERVTVM</original>
    <variation>IFCSFADTQTELELEFVFLLTLLL</variation>
    <location>
        <begin position="396"/>
        <end position="490"/>
    </location>
</feature>
<feature type="splice variant" id="VSP_030999" description="In isoform 2." evidence="13 14">
    <original>GKIILFLPCISRKLKRIKKGWEKSQFLEEGMGGTIPHVSPERVTVM</original>
    <variation>DLLQLCRYPD</variation>
    <location>
        <begin position="445"/>
        <end position="490"/>
    </location>
</feature>
<feature type="sequence variant" id="VAR_060387" description="In dbSNP:rs194520." evidence="5 6 8 10 16">
    <original>F</original>
    <variation>C</variation>
    <location>
        <position position="17"/>
    </location>
</feature>
<feature type="sequence variant" id="VAR_060388" description="In dbSNP:rs17863046.">
    <original>D</original>
    <variation>Y</variation>
    <location>
        <position position="40"/>
    </location>
</feature>
<feature type="sequence variant" id="VAR_057727" description="In dbSNP:rs13228098.">
    <original>G</original>
    <variation>E</variation>
    <location>
        <position position="214"/>
    </location>
</feature>
<feature type="sequence variant" id="VAR_057728" description="In dbSNP:rs194524." evidence="6">
    <original>R</original>
    <variation>Q</variation>
    <location>
        <position position="456"/>
    </location>
</feature>
<feature type="sequence variant" id="VAR_060389" description="In dbSNP:rs194525." evidence="5 6 7 11">
    <original>M</original>
    <variation>I</variation>
    <location>
        <position position="475"/>
    </location>
</feature>
<feature type="sequence conflict" description="In Ref. 2; AAN04080." evidence="15" ref="2">
    <original>F</original>
    <variation>V</variation>
    <location>
        <position position="17"/>
    </location>
</feature>
<feature type="sequence conflict" description="In Ref. 1; AAG32148/AAG32149." evidence="15" ref="1">
    <original>L</original>
    <variation>F</variation>
    <location>
        <position position="211"/>
    </location>
</feature>
<feature type="strand" evidence="17">
    <location>
        <begin position="32"/>
        <end position="36"/>
    </location>
</feature>
<feature type="helix" evidence="17">
    <location>
        <begin position="40"/>
        <end position="51"/>
    </location>
</feature>
<feature type="strand" evidence="17">
    <location>
        <begin position="55"/>
        <end position="59"/>
    </location>
</feature>
<feature type="helix" evidence="17">
    <location>
        <begin position="63"/>
        <end position="66"/>
    </location>
</feature>
<feature type="turn" evidence="17">
    <location>
        <begin position="67"/>
        <end position="69"/>
    </location>
</feature>
<feature type="strand" evidence="17">
    <location>
        <begin position="74"/>
        <end position="77"/>
    </location>
</feature>
<feature type="helix" evidence="17">
    <location>
        <begin position="79"/>
        <end position="82"/>
    </location>
</feature>
<feature type="helix" evidence="17">
    <location>
        <begin position="83"/>
        <end position="85"/>
    </location>
</feature>
<feature type="strand" evidence="17">
    <location>
        <begin position="87"/>
        <end position="91"/>
    </location>
</feature>
<feature type="helix" evidence="17">
    <location>
        <begin position="95"/>
        <end position="101"/>
    </location>
</feature>
<feature type="turn" evidence="17">
    <location>
        <begin position="105"/>
        <end position="107"/>
    </location>
</feature>
<feature type="strand" evidence="17">
    <location>
        <begin position="108"/>
        <end position="110"/>
    </location>
</feature>
<feature type="strand" evidence="17">
    <location>
        <begin position="112"/>
        <end position="115"/>
    </location>
</feature>
<feature type="strand" evidence="17">
    <location>
        <begin position="125"/>
        <end position="127"/>
    </location>
</feature>
<feature type="helix" evidence="17">
    <location>
        <begin position="129"/>
        <end position="136"/>
    </location>
</feature>
<feature type="strand" evidence="17">
    <location>
        <begin position="140"/>
        <end position="144"/>
    </location>
</feature>
<feature type="turn" evidence="17">
    <location>
        <begin position="153"/>
        <end position="155"/>
    </location>
</feature>
<feature type="strand" evidence="17">
    <location>
        <begin position="164"/>
        <end position="171"/>
    </location>
</feature>
<feature type="helix" evidence="17">
    <location>
        <begin position="172"/>
        <end position="184"/>
    </location>
</feature>
<feature type="strand" evidence="17">
    <location>
        <begin position="188"/>
        <end position="191"/>
    </location>
</feature>
<feature type="helix" evidence="17">
    <location>
        <begin position="198"/>
        <end position="203"/>
    </location>
</feature>
<feature type="helix" evidence="17">
    <location>
        <begin position="204"/>
        <end position="206"/>
    </location>
</feature>
<feature type="turn" evidence="17">
    <location>
        <begin position="210"/>
        <end position="212"/>
    </location>
</feature>
<feature type="helix" evidence="17">
    <location>
        <begin position="213"/>
        <end position="234"/>
    </location>
</feature>
<feature type="helix" evidence="17">
    <location>
        <begin position="236"/>
        <end position="239"/>
    </location>
</feature>
<feature type="helix" evidence="17">
    <location>
        <begin position="252"/>
        <end position="256"/>
    </location>
</feature>
<feature type="helix" evidence="17">
    <location>
        <begin position="259"/>
        <end position="284"/>
    </location>
</feature>
<feature type="strand" evidence="17">
    <location>
        <begin position="287"/>
        <end position="289"/>
    </location>
</feature>
<feature type="helix" evidence="17">
    <location>
        <begin position="293"/>
        <end position="300"/>
    </location>
</feature>
<feature type="helix" evidence="17">
    <location>
        <begin position="302"/>
        <end position="322"/>
    </location>
</feature>
<feature type="turn" evidence="17">
    <location>
        <begin position="323"/>
        <end position="325"/>
    </location>
</feature>
<feature type="turn" evidence="17">
    <location>
        <begin position="327"/>
        <end position="330"/>
    </location>
</feature>
<feature type="helix" evidence="17">
    <location>
        <begin position="351"/>
        <end position="377"/>
    </location>
</feature>
<feature type="helix" evidence="17">
    <location>
        <begin position="380"/>
        <end position="384"/>
    </location>
</feature>
<feature type="helix" evidence="17">
    <location>
        <begin position="388"/>
        <end position="418"/>
    </location>
</feature>
<feature type="turn" evidence="17">
    <location>
        <begin position="421"/>
        <end position="423"/>
    </location>
</feature>
<feature type="helix" evidence="17">
    <location>
        <begin position="431"/>
        <end position="448"/>
    </location>
</feature>
<feature type="helix" evidence="17">
    <location>
        <begin position="452"/>
        <end position="462"/>
    </location>
</feature>
<protein>
    <recommendedName>
        <fullName>Metalloreductase STEAP2</fullName>
        <ecNumber>1.16.1.-</ecNumber>
    </recommendedName>
    <alternativeName>
        <fullName>Prostate cancer-associated protein 1</fullName>
    </alternativeName>
    <alternativeName>
        <fullName>Protein up-regulated in metastatic prostate cancer</fullName>
        <shortName>PUMPCn</shortName>
    </alternativeName>
    <alternativeName>
        <fullName>Six-transmembrane epithelial antigen of prostate 2</fullName>
    </alternativeName>
    <alternativeName>
        <fullName>SixTransMembrane protein of prostate 1</fullName>
    </alternativeName>
</protein>
<gene>
    <name type="primary">STEAP2</name>
    <name type="synonym">PCANAP1</name>
    <name type="synonym">STAMP1</name>
    <name type="ORF">UNQ6507/PRO23203</name>
</gene>
<keyword id="KW-0002">3D-structure</keyword>
<keyword id="KW-0025">Alternative splicing</keyword>
<keyword id="KW-1003">Cell membrane</keyword>
<keyword id="KW-0186">Copper</keyword>
<keyword id="KW-0249">Electron transport</keyword>
<keyword id="KW-0967">Endosome</keyword>
<keyword id="KW-0274">FAD</keyword>
<keyword id="KW-0285">Flavoprotein</keyword>
<keyword id="KW-0349">Heme</keyword>
<keyword id="KW-0406">Ion transport</keyword>
<keyword id="KW-0408">Iron</keyword>
<keyword id="KW-0410">Iron transport</keyword>
<keyword id="KW-0472">Membrane</keyword>
<keyword id="KW-0479">Metal-binding</keyword>
<keyword id="KW-0520">NAD</keyword>
<keyword id="KW-0521">NADP</keyword>
<keyword id="KW-0560">Oxidoreductase</keyword>
<keyword id="KW-0597">Phosphoprotein</keyword>
<keyword id="KW-1267">Proteomics identification</keyword>
<keyword id="KW-1185">Reference proteome</keyword>
<keyword id="KW-0812">Transmembrane</keyword>
<keyword id="KW-1133">Transmembrane helix</keyword>
<keyword id="KW-0813">Transport</keyword>
<dbReference type="EC" id="1.16.1.-"/>
<dbReference type="EMBL" id="AY008444">
    <property type="protein sequence ID" value="AAG32148.1"/>
    <property type="molecule type" value="mRNA"/>
</dbReference>
<dbReference type="EMBL" id="AY008445">
    <property type="protein sequence ID" value="AAG32149.1"/>
    <property type="molecule type" value="mRNA"/>
</dbReference>
<dbReference type="EMBL" id="AF455138">
    <property type="protein sequence ID" value="AAN04080.1"/>
    <property type="molecule type" value="mRNA"/>
</dbReference>
<dbReference type="EMBL" id="AF526382">
    <property type="protein sequence ID" value="AAQ08976.1"/>
    <property type="molecule type" value="mRNA"/>
</dbReference>
<dbReference type="EMBL" id="AY358267">
    <property type="protein sequence ID" value="AAQ88634.1"/>
    <property type="molecule type" value="mRNA"/>
</dbReference>
<dbReference type="EMBL" id="AC002064">
    <property type="status" value="NOT_ANNOTATED_CDS"/>
    <property type="molecule type" value="Genomic_DNA"/>
</dbReference>
<dbReference type="EMBL" id="AC004969">
    <property type="status" value="NOT_ANNOTATED_CDS"/>
    <property type="molecule type" value="Genomic_DNA"/>
</dbReference>
<dbReference type="EMBL" id="CH236949">
    <property type="protein sequence ID" value="EAL24165.1"/>
    <property type="molecule type" value="Genomic_DNA"/>
</dbReference>
<dbReference type="EMBL" id="CH471091">
    <property type="protein sequence ID" value="EAW76890.1"/>
    <property type="molecule type" value="Genomic_DNA"/>
</dbReference>
<dbReference type="EMBL" id="CH471091">
    <property type="protein sequence ID" value="EAW76894.1"/>
    <property type="molecule type" value="Genomic_DNA"/>
</dbReference>
<dbReference type="CCDS" id="CCDS43612.1">
    <molecule id="Q8NFT2-2"/>
</dbReference>
<dbReference type="CCDS" id="CCDS5615.1">
    <molecule id="Q8NFT2-1"/>
</dbReference>
<dbReference type="CCDS" id="CCDS59064.1">
    <molecule id="Q8NFT2-3"/>
</dbReference>
<dbReference type="RefSeq" id="NP_001035755.1">
    <molecule id="Q8NFT2-1"/>
    <property type="nucleotide sequence ID" value="NM_001040665.2"/>
</dbReference>
<dbReference type="RefSeq" id="NP_001035756.1">
    <molecule id="Q8NFT2-2"/>
    <property type="nucleotide sequence ID" value="NM_001040666.2"/>
</dbReference>
<dbReference type="RefSeq" id="NP_001231873.1">
    <molecule id="Q8NFT2-1"/>
    <property type="nucleotide sequence ID" value="NM_001244944.2"/>
</dbReference>
<dbReference type="RefSeq" id="NP_001231874.1">
    <molecule id="Q8NFT2-2"/>
    <property type="nucleotide sequence ID" value="NM_001244945.2"/>
</dbReference>
<dbReference type="RefSeq" id="NP_001231875.1">
    <molecule id="Q8NFT2-3"/>
    <property type="nucleotide sequence ID" value="NM_001244946.2"/>
</dbReference>
<dbReference type="RefSeq" id="NP_694544.2">
    <molecule id="Q8NFT2-1"/>
    <property type="nucleotide sequence ID" value="NM_152999.4"/>
</dbReference>
<dbReference type="RefSeq" id="XP_006715984.1">
    <molecule id="Q8NFT2-1"/>
    <property type="nucleotide sequence ID" value="XM_006715921.5"/>
</dbReference>
<dbReference type="RefSeq" id="XP_016867442.1">
    <molecule id="Q8NFT2-1"/>
    <property type="nucleotide sequence ID" value="XM_017011953.3"/>
</dbReference>
<dbReference type="RefSeq" id="XP_016867443.1">
    <molecule id="Q8NFT2-1"/>
    <property type="nucleotide sequence ID" value="XM_017011954.3"/>
</dbReference>
<dbReference type="RefSeq" id="XP_016867445.1">
    <molecule id="Q8NFT2-2"/>
    <property type="nucleotide sequence ID" value="XM_017011956.3"/>
</dbReference>
<dbReference type="RefSeq" id="XP_016867446.1">
    <molecule id="Q8NFT2-2"/>
    <property type="nucleotide sequence ID" value="XM_017011957.2"/>
</dbReference>
<dbReference type="RefSeq" id="XP_047276128.1">
    <molecule id="Q8NFT2-1"/>
    <property type="nucleotide sequence ID" value="XM_047420172.1"/>
</dbReference>
<dbReference type="RefSeq" id="XP_047276129.1">
    <molecule id="Q8NFT2-1"/>
    <property type="nucleotide sequence ID" value="XM_047420173.1"/>
</dbReference>
<dbReference type="RefSeq" id="XP_047276130.1">
    <molecule id="Q8NFT2-1"/>
    <property type="nucleotide sequence ID" value="XM_047420174.1"/>
</dbReference>
<dbReference type="RefSeq" id="XP_047276131.1">
    <molecule id="Q8NFT2-1"/>
    <property type="nucleotide sequence ID" value="XM_047420175.1"/>
</dbReference>
<dbReference type="RefSeq" id="XP_047276136.1">
    <molecule id="Q8NFT2-2"/>
    <property type="nucleotide sequence ID" value="XM_047420180.1"/>
</dbReference>
<dbReference type="RefSeq" id="XP_047276137.1">
    <molecule id="Q8NFT2-2"/>
    <property type="nucleotide sequence ID" value="XM_047420181.1"/>
</dbReference>
<dbReference type="PDB" id="7TAI">
    <property type="method" value="EM"/>
    <property type="resolution" value="3.20 A"/>
    <property type="chains" value="A/B/C=1-490"/>
</dbReference>
<dbReference type="PDBsum" id="7TAI"/>
<dbReference type="EMDB" id="EMD-25775"/>
<dbReference type="SMR" id="Q8NFT2"/>
<dbReference type="BioGRID" id="129285">
    <property type="interactions" value="17"/>
</dbReference>
<dbReference type="CORUM" id="Q8NFT2"/>
<dbReference type="FunCoup" id="Q8NFT2">
    <property type="interactions" value="883"/>
</dbReference>
<dbReference type="IntAct" id="Q8NFT2">
    <property type="interactions" value="12"/>
</dbReference>
<dbReference type="STRING" id="9606.ENSP00000378119"/>
<dbReference type="TCDB" id="5.B.6.1.2">
    <property type="family name" value="the transmembrane epithelial antigen protein-3 ferric reductase (steap) family"/>
</dbReference>
<dbReference type="iPTMnet" id="Q8NFT2"/>
<dbReference type="PhosphoSitePlus" id="Q8NFT2"/>
<dbReference type="SwissPalm" id="Q8NFT2"/>
<dbReference type="BioMuta" id="STEAP2"/>
<dbReference type="DMDM" id="296452950"/>
<dbReference type="jPOST" id="Q8NFT2"/>
<dbReference type="MassIVE" id="Q8NFT2"/>
<dbReference type="PaxDb" id="9606-ENSP00000378119"/>
<dbReference type="PeptideAtlas" id="Q8NFT2"/>
<dbReference type="ProteomicsDB" id="33900"/>
<dbReference type="ProteomicsDB" id="73348">
    <molecule id="Q8NFT2-1"/>
</dbReference>
<dbReference type="ProteomicsDB" id="73349">
    <molecule id="Q8NFT2-2"/>
</dbReference>
<dbReference type="Pumba" id="Q8NFT2"/>
<dbReference type="Antibodypedia" id="29828">
    <property type="antibodies" value="203 antibodies from 31 providers"/>
</dbReference>
<dbReference type="DNASU" id="261729"/>
<dbReference type="Ensembl" id="ENST00000287908.7">
    <molecule id="Q8NFT2-1"/>
    <property type="protein sequence ID" value="ENSP00000287908.3"/>
    <property type="gene ID" value="ENSG00000157214.14"/>
</dbReference>
<dbReference type="Ensembl" id="ENST00000394621.7">
    <molecule id="Q8NFT2-1"/>
    <property type="protein sequence ID" value="ENSP00000378119.2"/>
    <property type="gene ID" value="ENSG00000157214.14"/>
</dbReference>
<dbReference type="Ensembl" id="ENST00000394622.6">
    <molecule id="Q8NFT2-1"/>
    <property type="protein sequence ID" value="ENSP00000378120.2"/>
    <property type="gene ID" value="ENSG00000157214.14"/>
</dbReference>
<dbReference type="Ensembl" id="ENST00000394626.5">
    <molecule id="Q8NFT2-2"/>
    <property type="protein sequence ID" value="ENSP00000378123.1"/>
    <property type="gene ID" value="ENSG00000157214.14"/>
</dbReference>
<dbReference type="Ensembl" id="ENST00000394629.2">
    <molecule id="Q8NFT2-2"/>
    <property type="protein sequence ID" value="ENSP00000378125.2"/>
    <property type="gene ID" value="ENSG00000157214.14"/>
</dbReference>
<dbReference type="Ensembl" id="ENST00000394632.5">
    <molecule id="Q8NFT2-3"/>
    <property type="protein sequence ID" value="ENSP00000378128.1"/>
    <property type="gene ID" value="ENSG00000157214.14"/>
</dbReference>
<dbReference type="GeneID" id="261729"/>
<dbReference type="KEGG" id="hsa:261729"/>
<dbReference type="MANE-Select" id="ENST00000394621.7">
    <property type="protein sequence ID" value="ENSP00000378119.2"/>
    <property type="RefSeq nucleotide sequence ID" value="NM_001244944.2"/>
    <property type="RefSeq protein sequence ID" value="NP_001231873.1"/>
</dbReference>
<dbReference type="UCSC" id="uc003ujz.4">
    <molecule id="Q8NFT2-1"/>
    <property type="organism name" value="human"/>
</dbReference>
<dbReference type="AGR" id="HGNC:17885"/>
<dbReference type="CTD" id="261729"/>
<dbReference type="DisGeNET" id="261729"/>
<dbReference type="GeneCards" id="STEAP2"/>
<dbReference type="HGNC" id="HGNC:17885">
    <property type="gene designation" value="STEAP2"/>
</dbReference>
<dbReference type="HPA" id="ENSG00000157214">
    <property type="expression patterns" value="Tissue enriched (prostate)"/>
</dbReference>
<dbReference type="MIM" id="605094">
    <property type="type" value="gene"/>
</dbReference>
<dbReference type="neXtProt" id="NX_Q8NFT2"/>
<dbReference type="OpenTargets" id="ENSG00000157214"/>
<dbReference type="PharmGKB" id="PA38473"/>
<dbReference type="VEuPathDB" id="HostDB:ENSG00000157214"/>
<dbReference type="eggNOG" id="ENOG502QVSJ">
    <property type="taxonomic scope" value="Eukaryota"/>
</dbReference>
<dbReference type="GeneTree" id="ENSGT00390000008042"/>
<dbReference type="InParanoid" id="Q8NFT2"/>
<dbReference type="OMA" id="HPYVKNQ"/>
<dbReference type="OrthoDB" id="550646at2759"/>
<dbReference type="PAN-GO" id="Q8NFT2">
    <property type="GO annotations" value="5 GO annotations based on evolutionary models"/>
</dbReference>
<dbReference type="PhylomeDB" id="Q8NFT2"/>
<dbReference type="TreeFam" id="TF332031"/>
<dbReference type="PathwayCommons" id="Q8NFT2"/>
<dbReference type="SignaLink" id="Q8NFT2"/>
<dbReference type="BioGRID-ORCS" id="261729">
    <property type="hits" value="14 hits in 1150 CRISPR screens"/>
</dbReference>
<dbReference type="ChiTaRS" id="STEAP2">
    <property type="organism name" value="human"/>
</dbReference>
<dbReference type="GeneWiki" id="STEAP2"/>
<dbReference type="GenomeRNAi" id="261729"/>
<dbReference type="Pharos" id="Q8NFT2">
    <property type="development level" value="Tbio"/>
</dbReference>
<dbReference type="PRO" id="PR:Q8NFT2"/>
<dbReference type="Proteomes" id="UP000005640">
    <property type="component" value="Chromosome 7"/>
</dbReference>
<dbReference type="RNAct" id="Q8NFT2">
    <property type="molecule type" value="protein"/>
</dbReference>
<dbReference type="Bgee" id="ENSG00000157214">
    <property type="expression patterns" value="Expressed in pericardium and 180 other cell types or tissues"/>
</dbReference>
<dbReference type="ExpressionAtlas" id="Q8NFT2">
    <property type="expression patterns" value="baseline and differential"/>
</dbReference>
<dbReference type="GO" id="GO:0005829">
    <property type="term" value="C:cytosol"/>
    <property type="evidence" value="ECO:0000314"/>
    <property type="project" value="UniProtKB"/>
</dbReference>
<dbReference type="GO" id="GO:0005769">
    <property type="term" value="C:early endosome"/>
    <property type="evidence" value="ECO:0000314"/>
    <property type="project" value="UniProtKB"/>
</dbReference>
<dbReference type="GO" id="GO:0005768">
    <property type="term" value="C:endosome"/>
    <property type="evidence" value="ECO:0000318"/>
    <property type="project" value="GO_Central"/>
</dbReference>
<dbReference type="GO" id="GO:0010008">
    <property type="term" value="C:endosome membrane"/>
    <property type="evidence" value="ECO:0007669"/>
    <property type="project" value="UniProtKB-SubCell"/>
</dbReference>
<dbReference type="GO" id="GO:0000139">
    <property type="term" value="C:Golgi membrane"/>
    <property type="evidence" value="ECO:0000314"/>
    <property type="project" value="UniProtKB"/>
</dbReference>
<dbReference type="GO" id="GO:0005886">
    <property type="term" value="C:plasma membrane"/>
    <property type="evidence" value="ECO:0000314"/>
    <property type="project" value="UniProtKB"/>
</dbReference>
<dbReference type="GO" id="GO:0030140">
    <property type="term" value="C:trans-Golgi network transport vesicle"/>
    <property type="evidence" value="ECO:0000314"/>
    <property type="project" value="UniProtKB"/>
</dbReference>
<dbReference type="GO" id="GO:0008823">
    <property type="term" value="F:cupric reductase (NADH) activity"/>
    <property type="evidence" value="ECO:0000318"/>
    <property type="project" value="GO_Central"/>
</dbReference>
<dbReference type="GO" id="GO:0052851">
    <property type="term" value="F:ferric-chelate reductase (NADPH) activity"/>
    <property type="evidence" value="ECO:0000318"/>
    <property type="project" value="GO_Central"/>
</dbReference>
<dbReference type="GO" id="GO:0046872">
    <property type="term" value="F:metal ion binding"/>
    <property type="evidence" value="ECO:0007669"/>
    <property type="project" value="UniProtKB-KW"/>
</dbReference>
<dbReference type="GO" id="GO:0015677">
    <property type="term" value="P:copper ion import"/>
    <property type="evidence" value="ECO:0000318"/>
    <property type="project" value="GO_Central"/>
</dbReference>
<dbReference type="GO" id="GO:0098705">
    <property type="term" value="P:copper ion import across plasma membrane"/>
    <property type="evidence" value="ECO:0007669"/>
    <property type="project" value="Ensembl"/>
</dbReference>
<dbReference type="GO" id="GO:0006897">
    <property type="term" value="P:endocytosis"/>
    <property type="evidence" value="ECO:0000314"/>
    <property type="project" value="UniProtKB"/>
</dbReference>
<dbReference type="GO" id="GO:0006893">
    <property type="term" value="P:Golgi to plasma membrane transport"/>
    <property type="evidence" value="ECO:0000314"/>
    <property type="project" value="UniProtKB"/>
</dbReference>
<dbReference type="GO" id="GO:0098711">
    <property type="term" value="P:iron ion import across plasma membrane"/>
    <property type="evidence" value="ECO:0007669"/>
    <property type="project" value="Ensembl"/>
</dbReference>
<dbReference type="GO" id="GO:0045055">
    <property type="term" value="P:regulated exocytosis"/>
    <property type="evidence" value="ECO:0000314"/>
    <property type="project" value="UniProtKB"/>
</dbReference>
<dbReference type="GO" id="GO:0009725">
    <property type="term" value="P:response to hormone"/>
    <property type="evidence" value="ECO:0000314"/>
    <property type="project" value="UniProtKB"/>
</dbReference>
<dbReference type="FunFam" id="3.40.50.720:FF:000051">
    <property type="entry name" value="STEAP2 metalloreductase"/>
    <property type="match status" value="1"/>
</dbReference>
<dbReference type="Gene3D" id="3.40.50.720">
    <property type="entry name" value="NAD(P)-binding Rossmann-like Domain"/>
    <property type="match status" value="1"/>
</dbReference>
<dbReference type="InterPro" id="IPR013130">
    <property type="entry name" value="Fe3_Rdtase_TM_dom"/>
</dbReference>
<dbReference type="InterPro" id="IPR036291">
    <property type="entry name" value="NAD(P)-bd_dom_sf"/>
</dbReference>
<dbReference type="InterPro" id="IPR028939">
    <property type="entry name" value="P5C_Rdtase_cat_N"/>
</dbReference>
<dbReference type="InterPro" id="IPR051267">
    <property type="entry name" value="STEAP_metalloreductase"/>
</dbReference>
<dbReference type="PANTHER" id="PTHR14239">
    <property type="entry name" value="DUDULIN-RELATED"/>
    <property type="match status" value="1"/>
</dbReference>
<dbReference type="PANTHER" id="PTHR14239:SF6">
    <property type="entry name" value="METALLOREDUCTASE STEAP2"/>
    <property type="match status" value="1"/>
</dbReference>
<dbReference type="Pfam" id="PF03807">
    <property type="entry name" value="F420_oxidored"/>
    <property type="match status" value="1"/>
</dbReference>
<dbReference type="Pfam" id="PF01794">
    <property type="entry name" value="Ferric_reduct"/>
    <property type="match status" value="1"/>
</dbReference>
<dbReference type="SUPFAM" id="SSF51735">
    <property type="entry name" value="NAD(P)-binding Rossmann-fold domains"/>
    <property type="match status" value="1"/>
</dbReference>
<name>STEA2_HUMAN</name>
<reference key="1">
    <citation type="journal article" date="2002" name="J. Biol. Chem.">
        <title>Molecular cloning and characterization of STAMP1, a highly prostate specific six-trans-membrane protein that is overexpressed in prostate cancer.</title>
        <authorList>
            <person name="Korkmaz K.S."/>
            <person name="Elbi C.C."/>
            <person name="Korkmaz C.G."/>
            <person name="Loda M."/>
            <person name="Hager G.L."/>
            <person name="Saatcioglu F."/>
        </authorList>
    </citation>
    <scope>NUCLEOTIDE SEQUENCE [MRNA] (ISOFORMS 1 AND 3)</scope>
    <scope>TISSUE SPECIFICITY</scope>
    <scope>VARIANTS CYS-17 AND ILE-475</scope>
    <source>
        <tissue>Prostate</tissue>
    </source>
</reference>
<reference key="2">
    <citation type="journal article" date="2002" name="Lab. Invest.">
        <title>Cloning and characterization of a novel six-transmembrane protein STEAP2, expressed in normal and malignant prostate.</title>
        <authorList>
            <person name="Porkka K.P."/>
            <person name="Helenius M.A."/>
            <person name="Visakorpi T."/>
        </authorList>
    </citation>
    <scope>NUCLEOTIDE SEQUENCE [MRNA] (ISOFORM 1)</scope>
    <scope>TISSUE SPECIFICITY</scope>
    <scope>SUBCELLULAR LOCATION</scope>
    <scope>VARIANTS CYS-17; GLN-456 AND ILE-475</scope>
    <source>
        <tissue>Prostate</tissue>
    </source>
</reference>
<reference key="3">
    <citation type="submission" date="2002-07" db="EMBL/GenBank/DDBJ databases">
        <title>Bioinformatics identification and clinical validation of tumor antigens by analysis of EST and tissue microarray data.</title>
        <authorList>
            <person name="Zhang Z."/>
            <person name="Eberhard D.A."/>
            <person name="Polakis P."/>
            <person name="Grimaldi C."/>
            <person name="Frantz G.D."/>
            <person name="Hillan K.J."/>
            <person name="Wood W.I."/>
        </authorList>
    </citation>
    <scope>NUCLEOTIDE SEQUENCE [MRNA] (ISOFORM 2)</scope>
    <scope>VARIANT CYS-17</scope>
</reference>
<reference key="4">
    <citation type="journal article" date="2003" name="Genome Res.">
        <title>The secreted protein discovery initiative (SPDI), a large-scale effort to identify novel human secreted and transmembrane proteins: a bioinformatics assessment.</title>
        <authorList>
            <person name="Clark H.F."/>
            <person name="Gurney A.L."/>
            <person name="Abaya E."/>
            <person name="Baker K."/>
            <person name="Baldwin D.T."/>
            <person name="Brush J."/>
            <person name="Chen J."/>
            <person name="Chow B."/>
            <person name="Chui C."/>
            <person name="Crowley C."/>
            <person name="Currell B."/>
            <person name="Deuel B."/>
            <person name="Dowd P."/>
            <person name="Eaton D."/>
            <person name="Foster J.S."/>
            <person name="Grimaldi C."/>
            <person name="Gu Q."/>
            <person name="Hass P.E."/>
            <person name="Heldens S."/>
            <person name="Huang A."/>
            <person name="Kim H.S."/>
            <person name="Klimowski L."/>
            <person name="Jin Y."/>
            <person name="Johnson S."/>
            <person name="Lee J."/>
            <person name="Lewis L."/>
            <person name="Liao D."/>
            <person name="Mark M.R."/>
            <person name="Robbie E."/>
            <person name="Sanchez C."/>
            <person name="Schoenfeld J."/>
            <person name="Seshagiri S."/>
            <person name="Simmons L."/>
            <person name="Singh J."/>
            <person name="Smith V."/>
            <person name="Stinson J."/>
            <person name="Vagts A."/>
            <person name="Vandlen R.L."/>
            <person name="Watanabe C."/>
            <person name="Wieand D."/>
            <person name="Woods K."/>
            <person name="Xie M.-H."/>
            <person name="Yansura D.G."/>
            <person name="Yi S."/>
            <person name="Yu G."/>
            <person name="Yuan J."/>
            <person name="Zhang M."/>
            <person name="Zhang Z."/>
            <person name="Goddard A.D."/>
            <person name="Wood W.I."/>
            <person name="Godowski P.J."/>
            <person name="Gray A.M."/>
        </authorList>
    </citation>
    <scope>NUCLEOTIDE SEQUENCE [LARGE SCALE MRNA] (ISOFORM 2)</scope>
    <scope>VARIANT CYS-17</scope>
</reference>
<reference key="5">
    <citation type="journal article" date="2003" name="Nature">
        <title>The DNA sequence of human chromosome 7.</title>
        <authorList>
            <person name="Hillier L.W."/>
            <person name="Fulton R.S."/>
            <person name="Fulton L.A."/>
            <person name="Graves T.A."/>
            <person name="Pepin K.H."/>
            <person name="Wagner-McPherson C."/>
            <person name="Layman D."/>
            <person name="Maas J."/>
            <person name="Jaeger S."/>
            <person name="Walker R."/>
            <person name="Wylie K."/>
            <person name="Sekhon M."/>
            <person name="Becker M.C."/>
            <person name="O'Laughlin M.D."/>
            <person name="Schaller M.E."/>
            <person name="Fewell G.A."/>
            <person name="Delehaunty K.D."/>
            <person name="Miner T.L."/>
            <person name="Nash W.E."/>
            <person name="Cordes M."/>
            <person name="Du H."/>
            <person name="Sun H."/>
            <person name="Edwards J."/>
            <person name="Bradshaw-Cordum H."/>
            <person name="Ali J."/>
            <person name="Andrews S."/>
            <person name="Isak A."/>
            <person name="Vanbrunt A."/>
            <person name="Nguyen C."/>
            <person name="Du F."/>
            <person name="Lamar B."/>
            <person name="Courtney L."/>
            <person name="Kalicki J."/>
            <person name="Ozersky P."/>
            <person name="Bielicki L."/>
            <person name="Scott K."/>
            <person name="Holmes A."/>
            <person name="Harkins R."/>
            <person name="Harris A."/>
            <person name="Strong C.M."/>
            <person name="Hou S."/>
            <person name="Tomlinson C."/>
            <person name="Dauphin-Kohlberg S."/>
            <person name="Kozlowicz-Reilly A."/>
            <person name="Leonard S."/>
            <person name="Rohlfing T."/>
            <person name="Rock S.M."/>
            <person name="Tin-Wollam A.-M."/>
            <person name="Abbott A."/>
            <person name="Minx P."/>
            <person name="Maupin R."/>
            <person name="Strowmatt C."/>
            <person name="Latreille P."/>
            <person name="Miller N."/>
            <person name="Johnson D."/>
            <person name="Murray J."/>
            <person name="Woessner J.P."/>
            <person name="Wendl M.C."/>
            <person name="Yang S.-P."/>
            <person name="Schultz B.R."/>
            <person name="Wallis J.W."/>
            <person name="Spieth J."/>
            <person name="Bieri T.A."/>
            <person name="Nelson J.O."/>
            <person name="Berkowicz N."/>
            <person name="Wohldmann P.E."/>
            <person name="Cook L.L."/>
            <person name="Hickenbotham M.T."/>
            <person name="Eldred J."/>
            <person name="Williams D."/>
            <person name="Bedell J.A."/>
            <person name="Mardis E.R."/>
            <person name="Clifton S.W."/>
            <person name="Chissoe S.L."/>
            <person name="Marra M.A."/>
            <person name="Raymond C."/>
            <person name="Haugen E."/>
            <person name="Gillett W."/>
            <person name="Zhou Y."/>
            <person name="James R."/>
            <person name="Phelps K."/>
            <person name="Iadanoto S."/>
            <person name="Bubb K."/>
            <person name="Simms E."/>
            <person name="Levy R."/>
            <person name="Clendenning J."/>
            <person name="Kaul R."/>
            <person name="Kent W.J."/>
            <person name="Furey T.S."/>
            <person name="Baertsch R.A."/>
            <person name="Brent M.R."/>
            <person name="Keibler E."/>
            <person name="Flicek P."/>
            <person name="Bork P."/>
            <person name="Suyama M."/>
            <person name="Bailey J.A."/>
            <person name="Portnoy M.E."/>
            <person name="Torrents D."/>
            <person name="Chinwalla A.T."/>
            <person name="Gish W.R."/>
            <person name="Eddy S.R."/>
            <person name="McPherson J.D."/>
            <person name="Olson M.V."/>
            <person name="Eichler E.E."/>
            <person name="Green E.D."/>
            <person name="Waterston R.H."/>
            <person name="Wilson R.K."/>
        </authorList>
    </citation>
    <scope>NUCLEOTIDE SEQUENCE [LARGE SCALE GENOMIC DNA]</scope>
</reference>
<reference key="6">
    <citation type="journal article" date="2003" name="Science">
        <title>Human chromosome 7: DNA sequence and biology.</title>
        <authorList>
            <person name="Scherer S.W."/>
            <person name="Cheung J."/>
            <person name="MacDonald J.R."/>
            <person name="Osborne L.R."/>
            <person name="Nakabayashi K."/>
            <person name="Herbrick J.-A."/>
            <person name="Carson A.R."/>
            <person name="Parker-Katiraee L."/>
            <person name="Skaug J."/>
            <person name="Khaja R."/>
            <person name="Zhang J."/>
            <person name="Hudek A.K."/>
            <person name="Li M."/>
            <person name="Haddad M."/>
            <person name="Duggan G.E."/>
            <person name="Fernandez B.A."/>
            <person name="Kanematsu E."/>
            <person name="Gentles S."/>
            <person name="Christopoulos C.C."/>
            <person name="Choufani S."/>
            <person name="Kwasnicka D."/>
            <person name="Zheng X.H."/>
            <person name="Lai Z."/>
            <person name="Nusskern D.R."/>
            <person name="Zhang Q."/>
            <person name="Gu Z."/>
            <person name="Lu F."/>
            <person name="Zeesman S."/>
            <person name="Nowaczyk M.J."/>
            <person name="Teshima I."/>
            <person name="Chitayat D."/>
            <person name="Shuman C."/>
            <person name="Weksberg R."/>
            <person name="Zackai E.H."/>
            <person name="Grebe T.A."/>
            <person name="Cox S.R."/>
            <person name="Kirkpatrick S.J."/>
            <person name="Rahman N."/>
            <person name="Friedman J.M."/>
            <person name="Heng H.H.Q."/>
            <person name="Pelicci P.G."/>
            <person name="Lo-Coco F."/>
            <person name="Belloni E."/>
            <person name="Shaffer L.G."/>
            <person name="Pober B."/>
            <person name="Morton C.C."/>
            <person name="Gusella J.F."/>
            <person name="Bruns G.A.P."/>
            <person name="Korf B.R."/>
            <person name="Quade B.J."/>
            <person name="Ligon A.H."/>
            <person name="Ferguson H."/>
            <person name="Higgins A.W."/>
            <person name="Leach N.T."/>
            <person name="Herrick S.R."/>
            <person name="Lemyre E."/>
            <person name="Farra C.G."/>
            <person name="Kim H.-G."/>
            <person name="Summers A.M."/>
            <person name="Gripp K.W."/>
            <person name="Roberts W."/>
            <person name="Szatmari P."/>
            <person name="Winsor E.J.T."/>
            <person name="Grzeschik K.-H."/>
            <person name="Teebi A."/>
            <person name="Minassian B.A."/>
            <person name="Kere J."/>
            <person name="Armengol L."/>
            <person name="Pujana M.A."/>
            <person name="Estivill X."/>
            <person name="Wilson M.D."/>
            <person name="Koop B.F."/>
            <person name="Tosi S."/>
            <person name="Moore G.E."/>
            <person name="Boright A.P."/>
            <person name="Zlotorynski E."/>
            <person name="Kerem B."/>
            <person name="Kroisel P.M."/>
            <person name="Petek E."/>
            <person name="Oscier D.G."/>
            <person name="Mould S.J."/>
            <person name="Doehner H."/>
            <person name="Doehner K."/>
            <person name="Rommens J.M."/>
            <person name="Vincent J.B."/>
            <person name="Venter J.C."/>
            <person name="Li P.W."/>
            <person name="Mural R.J."/>
            <person name="Adams M.D."/>
            <person name="Tsui L.-C."/>
        </authorList>
    </citation>
    <scope>NUCLEOTIDE SEQUENCE [LARGE SCALE GENOMIC DNA]</scope>
    <scope>VARIANT ILE-475</scope>
</reference>
<reference key="7">
    <citation type="submission" date="2005-09" db="EMBL/GenBank/DDBJ databases">
        <authorList>
            <person name="Mural R.J."/>
            <person name="Istrail S."/>
            <person name="Sutton G.G."/>
            <person name="Florea L."/>
            <person name="Halpern A.L."/>
            <person name="Mobarry C.M."/>
            <person name="Lippert R."/>
            <person name="Walenz B."/>
            <person name="Shatkay H."/>
            <person name="Dew I."/>
            <person name="Miller J.R."/>
            <person name="Flanigan M.J."/>
            <person name="Edwards N.J."/>
            <person name="Bolanos R."/>
            <person name="Fasulo D."/>
            <person name="Halldorsson B.V."/>
            <person name="Hannenhalli S."/>
            <person name="Turner R."/>
            <person name="Yooseph S."/>
            <person name="Lu F."/>
            <person name="Nusskern D.R."/>
            <person name="Shue B.C."/>
            <person name="Zheng X.H."/>
            <person name="Zhong F."/>
            <person name="Delcher A.L."/>
            <person name="Huson D.H."/>
            <person name="Kravitz S.A."/>
            <person name="Mouchard L."/>
            <person name="Reinert K."/>
            <person name="Remington K.A."/>
            <person name="Clark A.G."/>
            <person name="Waterman M.S."/>
            <person name="Eichler E.E."/>
            <person name="Adams M.D."/>
            <person name="Hunkapiller M.W."/>
            <person name="Myers E.W."/>
            <person name="Venter J.C."/>
        </authorList>
    </citation>
    <scope>NUCLEOTIDE SEQUENCE [LARGE SCALE GENOMIC DNA]</scope>
    <scope>VARIANT ILE-475</scope>
</reference>
<reference key="8">
    <citation type="journal article" date="2006" name="Blood">
        <title>The Steap proteins are metalloreductases.</title>
        <authorList>
            <person name="Ohgami R.S."/>
            <person name="Campagna D.R."/>
            <person name="McDonald A."/>
            <person name="Fleming M.D."/>
        </authorList>
    </citation>
    <scope>TISSUE SPECIFICITY</scope>
</reference>
<reference key="9">
    <citation type="journal article" date="2008" name="Proc. Natl. Acad. Sci. U.S.A.">
        <title>A quantitative atlas of mitotic phosphorylation.</title>
        <authorList>
            <person name="Dephoure N."/>
            <person name="Zhou C."/>
            <person name="Villen J."/>
            <person name="Beausoleil S.A."/>
            <person name="Bakalarski C.E."/>
            <person name="Elledge S.J."/>
            <person name="Gygi S.P."/>
        </authorList>
    </citation>
    <scope>VARIANT [LARGE SCALE ANALYSIS] CYS-17</scope>
    <scope>IDENTIFICATION BY MASS SPECTROMETRY [LARGE SCALE ANALYSIS]</scope>
    <source>
        <tissue>Cervix carcinoma</tissue>
    </source>
</reference>
<proteinExistence type="evidence at protein level"/>
<accession>Q8NFT2</accession>
<accession>A4D1F1</accession>
<accession>G5E9C6</accession>
<accession>Q6UXN6</accession>
<accession>Q6YPB1</accession>
<accession>Q8IUE7</accession>